<keyword id="KW-0238">DNA-binding</keyword>
<keyword id="KW-1017">Isopeptide bond</keyword>
<keyword id="KW-0479">Metal-binding</keyword>
<keyword id="KW-0539">Nucleus</keyword>
<keyword id="KW-1185">Reference proteome</keyword>
<keyword id="KW-0677">Repeat</keyword>
<keyword id="KW-0804">Transcription</keyword>
<keyword id="KW-0805">Transcription regulation</keyword>
<keyword id="KW-0832">Ubl conjugation</keyword>
<keyword id="KW-0862">Zinc</keyword>
<keyword id="KW-0863">Zinc-finger</keyword>
<comment type="function">
    <text evidence="1">May be involved in transcriptional regulation.</text>
</comment>
<comment type="subcellular location">
    <subcellularLocation>
        <location evidence="1">Nucleus</location>
    </subcellularLocation>
</comment>
<comment type="similarity">
    <text evidence="5">Belongs to the krueppel C2H2-type zinc-finger protein family.</text>
</comment>
<proteinExistence type="evidence at transcript level"/>
<name>ZN865_MOUSE</name>
<accession>Q3U3I9</accession>
<accession>D3Z3M5</accession>
<gene>
    <name type="primary">Znf865</name>
    <name type="synonym">Zfp865</name>
</gene>
<organism>
    <name type="scientific">Mus musculus</name>
    <name type="common">Mouse</name>
    <dbReference type="NCBI Taxonomy" id="10090"/>
    <lineage>
        <taxon>Eukaryota</taxon>
        <taxon>Metazoa</taxon>
        <taxon>Chordata</taxon>
        <taxon>Craniata</taxon>
        <taxon>Vertebrata</taxon>
        <taxon>Euteleostomi</taxon>
        <taxon>Mammalia</taxon>
        <taxon>Eutheria</taxon>
        <taxon>Euarchontoglires</taxon>
        <taxon>Glires</taxon>
        <taxon>Rodentia</taxon>
        <taxon>Myomorpha</taxon>
        <taxon>Muroidea</taxon>
        <taxon>Muridae</taxon>
        <taxon>Murinae</taxon>
        <taxon>Mus</taxon>
        <taxon>Mus</taxon>
    </lineage>
</organism>
<sequence length="1058" mass="111676">MEANQAGSGAGGGGSSGIGGEDGVHFQSYPFDFLEFLNHQRFEPMELYGEHAKAVAALPCTPGPPPQPPPQPPPPQYDYPPQSSFKPKAEAPSSSSSSSSSSSSSSSSSSSSSQAKKMDPPLPPTFGAPPPPLFDAAFPAPQWGIVDLSGHQHLFGNLKRGGPTPGPGVASGLGTPTGTPGPLTTPSQTPPGPAVGAACDPTKDDKGYFRRLKYLMERRFPCGVCQKSFKQSSHLVQHMLVHSGERPYECGICGRTYNHVSSLIRHRRCHKDVPPTPTGGTPQPGPALPSLGLPVSTASATASSDPAAVSSGPSATPATPATSTDGNTTPAAPPGVAMPPSATTGGDGPFACSLCWKVFKKPSHLHQHQIIHTGEKPFSCSVCSKSFNRRESLKRHVKTHSADLLRLPCGICGKVFRDASYLLKHQAAHAAAGTPRPVYPCDLCGKTYSAPQSLLRHKAAHAPPVATEPAKDGAASVPQPPPPFPPGPYLLPADPSTTDEKATAAAAAVVYGAVPVPLLSAHPLLLGGAGNGGAGGPGAGGPSKTFCCGICGRAFGRRETLKRHERIHTGEKPHQCPVCGKRFRESFHLSKHHVVHTRERPYKCELCGKVFGYPQSLTRHRQVHRLQLPCALAGATGLATGQGTTGACGPGAAGTSGGPADLSYACSDCGEHFPDLFHVMSHKEAHMSEKPYGCDACGKTFGFIENLMWHKLVHQAAPERLLAPTPSGPQSSDGGSSGGGTDASSVLDNGLAGEVGTAVAALAGVSGGSEDAGGATVAGSGGGTSSGAERFSCATCGQSFKHFLGLVTHKYVHLVRRTLGCGLCGQSFAGAYDLLLHRRSHRQKRGFRCPVCGKRFWEAALLMRHQRCHTEQRPYRCGVCGRGFLRSWYLRQHRVVHTGERAFKCGVCAKHFAQSSSLAEHRRLHAVARPQRCGACGKTFRYRSNLLEHQRLHLGERAYRCEHCGKGFFYLSSVLRHQRAHEPPRPELRCPACLKAFKDPGYFRKHLAAHQGGRPFRCSSCGEGFANTYGLKKHRLMHKAEGLGMPGTGGSALAGKDP</sequence>
<feature type="chain" id="PRO_0000404595" description="Zinc finger protein 865">
    <location>
        <begin position="1"/>
        <end position="1058"/>
    </location>
</feature>
<feature type="zinc finger region" description="C2H2-type 1" evidence="3">
    <location>
        <begin position="220"/>
        <end position="242"/>
    </location>
</feature>
<feature type="zinc finger region" description="C2H2-type 2" evidence="3">
    <location>
        <begin position="248"/>
        <end position="270"/>
    </location>
</feature>
<feature type="zinc finger region" description="C2H2-type 3" evidence="3">
    <location>
        <begin position="350"/>
        <end position="372"/>
    </location>
</feature>
<feature type="zinc finger region" description="C2H2-type 4" evidence="3">
    <location>
        <begin position="378"/>
        <end position="400"/>
    </location>
</feature>
<feature type="zinc finger region" description="C2H2-type 5" evidence="3">
    <location>
        <begin position="407"/>
        <end position="429"/>
    </location>
</feature>
<feature type="zinc finger region" description="C2H2-type 6" evidence="3">
    <location>
        <begin position="439"/>
        <end position="461"/>
    </location>
</feature>
<feature type="zinc finger region" description="C2H2-type 7" evidence="3">
    <location>
        <begin position="546"/>
        <end position="568"/>
    </location>
</feature>
<feature type="zinc finger region" description="C2H2-type 8" evidence="3">
    <location>
        <begin position="574"/>
        <end position="596"/>
    </location>
</feature>
<feature type="zinc finger region" description="C2H2-type 9" evidence="3">
    <location>
        <begin position="602"/>
        <end position="624"/>
    </location>
</feature>
<feature type="zinc finger region" description="C2H2-type 10" evidence="3">
    <location>
        <begin position="664"/>
        <end position="686"/>
    </location>
</feature>
<feature type="zinc finger region" description="C2H2-type 11" evidence="3">
    <location>
        <begin position="692"/>
        <end position="714"/>
    </location>
</feature>
<feature type="zinc finger region" description="C2H2-type 12" evidence="3">
    <location>
        <begin position="791"/>
        <end position="813"/>
    </location>
</feature>
<feature type="zinc finger region" description="C2H2-type 13" evidence="3">
    <location>
        <begin position="819"/>
        <end position="841"/>
    </location>
</feature>
<feature type="zinc finger region" description="C2H2-type 14" evidence="3">
    <location>
        <begin position="847"/>
        <end position="869"/>
    </location>
</feature>
<feature type="zinc finger region" description="C2H2-type 15" evidence="3">
    <location>
        <begin position="875"/>
        <end position="897"/>
    </location>
</feature>
<feature type="zinc finger region" description="C2H2-type 16" evidence="3">
    <location>
        <begin position="903"/>
        <end position="925"/>
    </location>
</feature>
<feature type="zinc finger region" description="C2H2-type 17" evidence="3">
    <location>
        <begin position="931"/>
        <end position="953"/>
    </location>
</feature>
<feature type="zinc finger region" description="C2H2-type 18" evidence="3">
    <location>
        <begin position="959"/>
        <end position="981"/>
    </location>
</feature>
<feature type="zinc finger region" description="C2H2-type 19" evidence="3">
    <location>
        <begin position="988"/>
        <end position="1010"/>
    </location>
</feature>
<feature type="zinc finger region" description="C2H2-type 20" evidence="3">
    <location>
        <begin position="1016"/>
        <end position="1038"/>
    </location>
</feature>
<feature type="region of interest" description="Disordered" evidence="4">
    <location>
        <begin position="1"/>
        <end position="24"/>
    </location>
</feature>
<feature type="region of interest" description="Disordered" evidence="4">
    <location>
        <begin position="58"/>
        <end position="134"/>
    </location>
</feature>
<feature type="region of interest" description="Disordered" evidence="4">
    <location>
        <begin position="156"/>
        <end position="201"/>
    </location>
</feature>
<feature type="region of interest" description="Disordered" evidence="4">
    <location>
        <begin position="269"/>
        <end position="342"/>
    </location>
</feature>
<feature type="region of interest" description="Disordered" evidence="4">
    <location>
        <begin position="459"/>
        <end position="486"/>
    </location>
</feature>
<feature type="region of interest" description="Disordered" evidence="4">
    <location>
        <begin position="721"/>
        <end position="743"/>
    </location>
</feature>
<feature type="compositionally biased region" description="Gly residues" evidence="4">
    <location>
        <begin position="8"/>
        <end position="21"/>
    </location>
</feature>
<feature type="compositionally biased region" description="Pro residues" evidence="4">
    <location>
        <begin position="61"/>
        <end position="78"/>
    </location>
</feature>
<feature type="compositionally biased region" description="Low complexity" evidence="4">
    <location>
        <begin position="93"/>
        <end position="113"/>
    </location>
</feature>
<feature type="compositionally biased region" description="Pro residues" evidence="4">
    <location>
        <begin position="120"/>
        <end position="133"/>
    </location>
</feature>
<feature type="compositionally biased region" description="Low complexity" evidence="4">
    <location>
        <begin position="172"/>
        <end position="187"/>
    </location>
</feature>
<feature type="compositionally biased region" description="Low complexity" evidence="4">
    <location>
        <begin position="294"/>
        <end position="324"/>
    </location>
</feature>
<feature type="cross-link" description="Glycyl lysine isopeptide (Lys-Gly) (interchain with G-Cter in SUMO2)" evidence="2">
    <location>
        <position position="801"/>
    </location>
</feature>
<feature type="cross-link" description="Glycyl lysine isopeptide (Lys-Gly) (interchain with G-Cter in SUMO2)" evidence="2">
    <location>
        <position position="1039"/>
    </location>
</feature>
<reference key="1">
    <citation type="journal article" date="2005" name="Science">
        <title>The transcriptional landscape of the mammalian genome.</title>
        <authorList>
            <person name="Carninci P."/>
            <person name="Kasukawa T."/>
            <person name="Katayama S."/>
            <person name="Gough J."/>
            <person name="Frith M.C."/>
            <person name="Maeda N."/>
            <person name="Oyama R."/>
            <person name="Ravasi T."/>
            <person name="Lenhard B."/>
            <person name="Wells C."/>
            <person name="Kodzius R."/>
            <person name="Shimokawa K."/>
            <person name="Bajic V.B."/>
            <person name="Brenner S.E."/>
            <person name="Batalov S."/>
            <person name="Forrest A.R."/>
            <person name="Zavolan M."/>
            <person name="Davis M.J."/>
            <person name="Wilming L.G."/>
            <person name="Aidinis V."/>
            <person name="Allen J.E."/>
            <person name="Ambesi-Impiombato A."/>
            <person name="Apweiler R."/>
            <person name="Aturaliya R.N."/>
            <person name="Bailey T.L."/>
            <person name="Bansal M."/>
            <person name="Baxter L."/>
            <person name="Beisel K.W."/>
            <person name="Bersano T."/>
            <person name="Bono H."/>
            <person name="Chalk A.M."/>
            <person name="Chiu K.P."/>
            <person name="Choudhary V."/>
            <person name="Christoffels A."/>
            <person name="Clutterbuck D.R."/>
            <person name="Crowe M.L."/>
            <person name="Dalla E."/>
            <person name="Dalrymple B.P."/>
            <person name="de Bono B."/>
            <person name="Della Gatta G."/>
            <person name="di Bernardo D."/>
            <person name="Down T."/>
            <person name="Engstrom P."/>
            <person name="Fagiolini M."/>
            <person name="Faulkner G."/>
            <person name="Fletcher C.F."/>
            <person name="Fukushima T."/>
            <person name="Furuno M."/>
            <person name="Futaki S."/>
            <person name="Gariboldi M."/>
            <person name="Georgii-Hemming P."/>
            <person name="Gingeras T.R."/>
            <person name="Gojobori T."/>
            <person name="Green R.E."/>
            <person name="Gustincich S."/>
            <person name="Harbers M."/>
            <person name="Hayashi Y."/>
            <person name="Hensch T.K."/>
            <person name="Hirokawa N."/>
            <person name="Hill D."/>
            <person name="Huminiecki L."/>
            <person name="Iacono M."/>
            <person name="Ikeo K."/>
            <person name="Iwama A."/>
            <person name="Ishikawa T."/>
            <person name="Jakt M."/>
            <person name="Kanapin A."/>
            <person name="Katoh M."/>
            <person name="Kawasawa Y."/>
            <person name="Kelso J."/>
            <person name="Kitamura H."/>
            <person name="Kitano H."/>
            <person name="Kollias G."/>
            <person name="Krishnan S.P."/>
            <person name="Kruger A."/>
            <person name="Kummerfeld S.K."/>
            <person name="Kurochkin I.V."/>
            <person name="Lareau L.F."/>
            <person name="Lazarevic D."/>
            <person name="Lipovich L."/>
            <person name="Liu J."/>
            <person name="Liuni S."/>
            <person name="McWilliam S."/>
            <person name="Madan Babu M."/>
            <person name="Madera M."/>
            <person name="Marchionni L."/>
            <person name="Matsuda H."/>
            <person name="Matsuzawa S."/>
            <person name="Miki H."/>
            <person name="Mignone F."/>
            <person name="Miyake S."/>
            <person name="Morris K."/>
            <person name="Mottagui-Tabar S."/>
            <person name="Mulder N."/>
            <person name="Nakano N."/>
            <person name="Nakauchi H."/>
            <person name="Ng P."/>
            <person name="Nilsson R."/>
            <person name="Nishiguchi S."/>
            <person name="Nishikawa S."/>
            <person name="Nori F."/>
            <person name="Ohara O."/>
            <person name="Okazaki Y."/>
            <person name="Orlando V."/>
            <person name="Pang K.C."/>
            <person name="Pavan W.J."/>
            <person name="Pavesi G."/>
            <person name="Pesole G."/>
            <person name="Petrovsky N."/>
            <person name="Piazza S."/>
            <person name="Reed J."/>
            <person name="Reid J.F."/>
            <person name="Ring B.Z."/>
            <person name="Ringwald M."/>
            <person name="Rost B."/>
            <person name="Ruan Y."/>
            <person name="Salzberg S.L."/>
            <person name="Sandelin A."/>
            <person name="Schneider C."/>
            <person name="Schoenbach C."/>
            <person name="Sekiguchi K."/>
            <person name="Semple C.A."/>
            <person name="Seno S."/>
            <person name="Sessa L."/>
            <person name="Sheng Y."/>
            <person name="Shibata Y."/>
            <person name="Shimada H."/>
            <person name="Shimada K."/>
            <person name="Silva D."/>
            <person name="Sinclair B."/>
            <person name="Sperling S."/>
            <person name="Stupka E."/>
            <person name="Sugiura K."/>
            <person name="Sultana R."/>
            <person name="Takenaka Y."/>
            <person name="Taki K."/>
            <person name="Tammoja K."/>
            <person name="Tan S.L."/>
            <person name="Tang S."/>
            <person name="Taylor M.S."/>
            <person name="Tegner J."/>
            <person name="Teichmann S.A."/>
            <person name="Ueda H.R."/>
            <person name="van Nimwegen E."/>
            <person name="Verardo R."/>
            <person name="Wei C.L."/>
            <person name="Yagi K."/>
            <person name="Yamanishi H."/>
            <person name="Zabarovsky E."/>
            <person name="Zhu S."/>
            <person name="Zimmer A."/>
            <person name="Hide W."/>
            <person name="Bult C."/>
            <person name="Grimmond S.M."/>
            <person name="Teasdale R.D."/>
            <person name="Liu E.T."/>
            <person name="Brusic V."/>
            <person name="Quackenbush J."/>
            <person name="Wahlestedt C."/>
            <person name="Mattick J.S."/>
            <person name="Hume D.A."/>
            <person name="Kai C."/>
            <person name="Sasaki D."/>
            <person name="Tomaru Y."/>
            <person name="Fukuda S."/>
            <person name="Kanamori-Katayama M."/>
            <person name="Suzuki M."/>
            <person name="Aoki J."/>
            <person name="Arakawa T."/>
            <person name="Iida J."/>
            <person name="Imamura K."/>
            <person name="Itoh M."/>
            <person name="Kato T."/>
            <person name="Kawaji H."/>
            <person name="Kawagashira N."/>
            <person name="Kawashima T."/>
            <person name="Kojima M."/>
            <person name="Kondo S."/>
            <person name="Konno H."/>
            <person name="Nakano K."/>
            <person name="Ninomiya N."/>
            <person name="Nishio T."/>
            <person name="Okada M."/>
            <person name="Plessy C."/>
            <person name="Shibata K."/>
            <person name="Shiraki T."/>
            <person name="Suzuki S."/>
            <person name="Tagami M."/>
            <person name="Waki K."/>
            <person name="Watahiki A."/>
            <person name="Okamura-Oho Y."/>
            <person name="Suzuki H."/>
            <person name="Kawai J."/>
            <person name="Hayashizaki Y."/>
        </authorList>
    </citation>
    <scope>NUCLEOTIDE SEQUENCE [LARGE SCALE MRNA]</scope>
    <source>
        <strain>NOD</strain>
    </source>
</reference>
<reference key="2">
    <citation type="journal article" date="2009" name="PLoS Biol.">
        <title>Lineage-specific biology revealed by a finished genome assembly of the mouse.</title>
        <authorList>
            <person name="Church D.M."/>
            <person name="Goodstadt L."/>
            <person name="Hillier L.W."/>
            <person name="Zody M.C."/>
            <person name="Goldstein S."/>
            <person name="She X."/>
            <person name="Bult C.J."/>
            <person name="Agarwala R."/>
            <person name="Cherry J.L."/>
            <person name="DiCuccio M."/>
            <person name="Hlavina W."/>
            <person name="Kapustin Y."/>
            <person name="Meric P."/>
            <person name="Maglott D."/>
            <person name="Birtle Z."/>
            <person name="Marques A.C."/>
            <person name="Graves T."/>
            <person name="Zhou S."/>
            <person name="Teague B."/>
            <person name="Potamousis K."/>
            <person name="Churas C."/>
            <person name="Place M."/>
            <person name="Herschleb J."/>
            <person name="Runnheim R."/>
            <person name="Forrest D."/>
            <person name="Amos-Landgraf J."/>
            <person name="Schwartz D.C."/>
            <person name="Cheng Z."/>
            <person name="Lindblad-Toh K."/>
            <person name="Eichler E.E."/>
            <person name="Ponting C.P."/>
        </authorList>
    </citation>
    <scope>NUCLEOTIDE SEQUENCE [LARGE SCALE GENOMIC DNA]</scope>
    <source>
        <strain>C57BL/6J</strain>
    </source>
</reference>
<protein>
    <recommendedName>
        <fullName>Zinc finger protein 865</fullName>
    </recommendedName>
</protein>
<evidence type="ECO:0000250" key="1"/>
<evidence type="ECO:0000250" key="2">
    <source>
        <dbReference type="UniProtKB" id="P0CJ78"/>
    </source>
</evidence>
<evidence type="ECO:0000255" key="3">
    <source>
        <dbReference type="PROSITE-ProRule" id="PRU00042"/>
    </source>
</evidence>
<evidence type="ECO:0000256" key="4">
    <source>
        <dbReference type="SAM" id="MobiDB-lite"/>
    </source>
</evidence>
<evidence type="ECO:0000305" key="5"/>
<dbReference type="EMBL" id="AK154737">
    <property type="protein sequence ID" value="BAE32797.1"/>
    <property type="molecule type" value="mRNA"/>
</dbReference>
<dbReference type="EMBL" id="AC157563">
    <property type="status" value="NOT_ANNOTATED_CDS"/>
    <property type="molecule type" value="Genomic_DNA"/>
</dbReference>
<dbReference type="CCDS" id="CCDS20753.1"/>
<dbReference type="RefSeq" id="NP_001028555.1">
    <property type="nucleotide sequence ID" value="NM_001033383.2"/>
</dbReference>
<dbReference type="RefSeq" id="XP_006540122.1">
    <property type="nucleotide sequence ID" value="XM_006540059.2"/>
</dbReference>
<dbReference type="RefSeq" id="XP_006540123.1">
    <property type="nucleotide sequence ID" value="XM_006540060.1"/>
</dbReference>
<dbReference type="SMR" id="Q3U3I9"/>
<dbReference type="FunCoup" id="Q3U3I9">
    <property type="interactions" value="213"/>
</dbReference>
<dbReference type="STRING" id="10090.ENSMUSP00000075601"/>
<dbReference type="GlyGen" id="Q3U3I9">
    <property type="glycosylation" value="9 sites, 1 O-linked glycan (2 sites)"/>
</dbReference>
<dbReference type="iPTMnet" id="Q3U3I9"/>
<dbReference type="PhosphoSitePlus" id="Q3U3I9"/>
<dbReference type="jPOST" id="Q3U3I9"/>
<dbReference type="PaxDb" id="10090-ENSMUSP00000075601"/>
<dbReference type="PeptideAtlas" id="Q3U3I9"/>
<dbReference type="ProteomicsDB" id="302146"/>
<dbReference type="Pumba" id="Q3U3I9"/>
<dbReference type="Antibodypedia" id="69405">
    <property type="antibodies" value="38 antibodies from 11 providers"/>
</dbReference>
<dbReference type="Ensembl" id="ENSMUST00000076251.7">
    <property type="protein sequence ID" value="ENSMUSP00000075601.5"/>
    <property type="gene ID" value="ENSMUSG00000074405.9"/>
</dbReference>
<dbReference type="GeneID" id="319748"/>
<dbReference type="KEGG" id="mmu:319748"/>
<dbReference type="UCSC" id="uc009ezk.1">
    <property type="organism name" value="mouse"/>
</dbReference>
<dbReference type="AGR" id="MGI:2442656"/>
<dbReference type="CTD" id="319748"/>
<dbReference type="MGI" id="MGI:2442656">
    <property type="gene designation" value="Zfp865"/>
</dbReference>
<dbReference type="VEuPathDB" id="HostDB:ENSMUSG00000074405"/>
<dbReference type="eggNOG" id="KOG1721">
    <property type="taxonomic scope" value="Eukaryota"/>
</dbReference>
<dbReference type="GeneTree" id="ENSGT00530000064557"/>
<dbReference type="HOGENOM" id="CLU_010472_0_0_1"/>
<dbReference type="InParanoid" id="Q3U3I9"/>
<dbReference type="OMA" id="SHKEVHM"/>
<dbReference type="PhylomeDB" id="Q3U3I9"/>
<dbReference type="TreeFam" id="TF350857"/>
<dbReference type="BioGRID-ORCS" id="319748">
    <property type="hits" value="3 hits in 79 CRISPR screens"/>
</dbReference>
<dbReference type="ChiTaRS" id="Zfp865">
    <property type="organism name" value="mouse"/>
</dbReference>
<dbReference type="PRO" id="PR:Q3U3I9"/>
<dbReference type="Proteomes" id="UP000000589">
    <property type="component" value="Chromosome 7"/>
</dbReference>
<dbReference type="RNAct" id="Q3U3I9">
    <property type="molecule type" value="protein"/>
</dbReference>
<dbReference type="Bgee" id="ENSMUSG00000074405">
    <property type="expression patterns" value="Expressed in embryonic brain and 95 other cell types or tissues"/>
</dbReference>
<dbReference type="ExpressionAtlas" id="Q3U3I9">
    <property type="expression patterns" value="baseline and differential"/>
</dbReference>
<dbReference type="GO" id="GO:0005634">
    <property type="term" value="C:nucleus"/>
    <property type="evidence" value="ECO:0007669"/>
    <property type="project" value="UniProtKB-SubCell"/>
</dbReference>
<dbReference type="GO" id="GO:0003677">
    <property type="term" value="F:DNA binding"/>
    <property type="evidence" value="ECO:0007669"/>
    <property type="project" value="UniProtKB-KW"/>
</dbReference>
<dbReference type="GO" id="GO:0008270">
    <property type="term" value="F:zinc ion binding"/>
    <property type="evidence" value="ECO:0007669"/>
    <property type="project" value="UniProtKB-KW"/>
</dbReference>
<dbReference type="FunFam" id="3.30.160.60:FF:000100">
    <property type="entry name" value="Zinc finger 45-like"/>
    <property type="match status" value="1"/>
</dbReference>
<dbReference type="FunFam" id="3.30.160.60:FF:000446">
    <property type="entry name" value="Zinc finger protein"/>
    <property type="match status" value="1"/>
</dbReference>
<dbReference type="FunFam" id="3.30.160.60:FF:001228">
    <property type="entry name" value="Zinc finger protein 236"/>
    <property type="match status" value="1"/>
</dbReference>
<dbReference type="FunFam" id="3.30.160.60:FF:000671">
    <property type="entry name" value="Zinc finger protein 26"/>
    <property type="match status" value="1"/>
</dbReference>
<dbReference type="FunFam" id="3.30.160.60:FF:001498">
    <property type="entry name" value="Zinc finger protein 404"/>
    <property type="match status" value="1"/>
</dbReference>
<dbReference type="FunFam" id="3.30.160.60:FF:000340">
    <property type="entry name" value="zinc finger protein 473 isoform X1"/>
    <property type="match status" value="1"/>
</dbReference>
<dbReference type="FunFam" id="3.30.160.60:FF:000145">
    <property type="entry name" value="Zinc finger protein 574"/>
    <property type="match status" value="1"/>
</dbReference>
<dbReference type="FunFam" id="3.30.160.60:FF:000771">
    <property type="entry name" value="zinc finger protein 648"/>
    <property type="match status" value="1"/>
</dbReference>
<dbReference type="FunFam" id="3.30.160.60:FF:000624">
    <property type="entry name" value="zinc finger protein 697"/>
    <property type="match status" value="2"/>
</dbReference>
<dbReference type="FunFam" id="3.30.160.60:FF:000110">
    <property type="entry name" value="Zinc finger protein-like"/>
    <property type="match status" value="1"/>
</dbReference>
<dbReference type="FunFam" id="3.30.160.60:FF:000634">
    <property type="entry name" value="Zinc finger X-chromosomal protein"/>
    <property type="match status" value="1"/>
</dbReference>
<dbReference type="Gene3D" id="3.30.160.60">
    <property type="entry name" value="Classic Zinc Finger"/>
    <property type="match status" value="17"/>
</dbReference>
<dbReference type="InterPro" id="IPR050636">
    <property type="entry name" value="C2H2-ZF_domain-containing"/>
</dbReference>
<dbReference type="InterPro" id="IPR036236">
    <property type="entry name" value="Znf_C2H2_sf"/>
</dbReference>
<dbReference type="InterPro" id="IPR013087">
    <property type="entry name" value="Znf_C2H2_type"/>
</dbReference>
<dbReference type="PANTHER" id="PTHR47772:SF13">
    <property type="entry name" value="GASTRULA ZINC FINGER PROTEIN XLCGF49.1-LIKE-RELATED"/>
    <property type="match status" value="1"/>
</dbReference>
<dbReference type="PANTHER" id="PTHR47772">
    <property type="entry name" value="ZINC FINGER PROTEIN 200"/>
    <property type="match status" value="1"/>
</dbReference>
<dbReference type="Pfam" id="PF00096">
    <property type="entry name" value="zf-C2H2"/>
    <property type="match status" value="12"/>
</dbReference>
<dbReference type="Pfam" id="PF13912">
    <property type="entry name" value="zf-C2H2_6"/>
    <property type="match status" value="2"/>
</dbReference>
<dbReference type="SMART" id="SM00355">
    <property type="entry name" value="ZnF_C2H2"/>
    <property type="match status" value="20"/>
</dbReference>
<dbReference type="SUPFAM" id="SSF57667">
    <property type="entry name" value="beta-beta-alpha zinc fingers"/>
    <property type="match status" value="11"/>
</dbReference>
<dbReference type="PROSITE" id="PS00028">
    <property type="entry name" value="ZINC_FINGER_C2H2_1"/>
    <property type="match status" value="20"/>
</dbReference>
<dbReference type="PROSITE" id="PS50157">
    <property type="entry name" value="ZINC_FINGER_C2H2_2"/>
    <property type="match status" value="20"/>
</dbReference>